<accession>Q8Z521</accession>
<evidence type="ECO:0000250" key="1"/>
<evidence type="ECO:0000255" key="2"/>
<evidence type="ECO:0000305" key="3"/>
<reference key="1">
    <citation type="journal article" date="2001" name="Nature">
        <title>Complete genome sequence of a multiple drug resistant Salmonella enterica serovar Typhi CT18.</title>
        <authorList>
            <person name="Parkhill J."/>
            <person name="Dougan G."/>
            <person name="James K.D."/>
            <person name="Thomson N.R."/>
            <person name="Pickard D."/>
            <person name="Wain J."/>
            <person name="Churcher C.M."/>
            <person name="Mungall K.L."/>
            <person name="Bentley S.D."/>
            <person name="Holden M.T.G."/>
            <person name="Sebaihia M."/>
            <person name="Baker S."/>
            <person name="Basham D."/>
            <person name="Brooks K."/>
            <person name="Chillingworth T."/>
            <person name="Connerton P."/>
            <person name="Cronin A."/>
            <person name="Davis P."/>
            <person name="Davies R.M."/>
            <person name="Dowd L."/>
            <person name="White N."/>
            <person name="Farrar J."/>
            <person name="Feltwell T."/>
            <person name="Hamlin N."/>
            <person name="Haque A."/>
            <person name="Hien T.T."/>
            <person name="Holroyd S."/>
            <person name="Jagels K."/>
            <person name="Krogh A."/>
            <person name="Larsen T.S."/>
            <person name="Leather S."/>
            <person name="Moule S."/>
            <person name="O'Gaora P."/>
            <person name="Parry C."/>
            <person name="Quail M.A."/>
            <person name="Rutherford K.M."/>
            <person name="Simmonds M."/>
            <person name="Skelton J."/>
            <person name="Stevens K."/>
            <person name="Whitehead S."/>
            <person name="Barrell B.G."/>
        </authorList>
    </citation>
    <scope>NUCLEOTIDE SEQUENCE [LARGE SCALE GENOMIC DNA]</scope>
    <source>
        <strain>CT18</strain>
    </source>
</reference>
<reference key="2">
    <citation type="journal article" date="2003" name="J. Bacteriol.">
        <title>Comparative genomics of Salmonella enterica serovar Typhi strains Ty2 and CT18.</title>
        <authorList>
            <person name="Deng W."/>
            <person name="Liou S.-R."/>
            <person name="Plunkett G. III"/>
            <person name="Mayhew G.F."/>
            <person name="Rose D.J."/>
            <person name="Burland V."/>
            <person name="Kodoyianni V."/>
            <person name="Schwartz D.C."/>
            <person name="Blattner F.R."/>
        </authorList>
    </citation>
    <scope>NUCLEOTIDE SEQUENCE [LARGE SCALE GENOMIC DNA]</scope>
    <source>
        <strain>ATCC 700931 / Ty2</strain>
    </source>
</reference>
<gene>
    <name type="primary">yfbV</name>
    <name type="ordered locus">STY2566</name>
    <name type="ordered locus">t0528</name>
</gene>
<protein>
    <recommendedName>
        <fullName>UPF0208 membrane protein YfbV</fullName>
    </recommendedName>
</protein>
<dbReference type="EMBL" id="AL513382">
    <property type="protein sequence ID" value="CAD07568.1"/>
    <property type="molecule type" value="Genomic_DNA"/>
</dbReference>
<dbReference type="EMBL" id="AE014613">
    <property type="protein sequence ID" value="AAO68234.1"/>
    <property type="molecule type" value="Genomic_DNA"/>
</dbReference>
<dbReference type="RefSeq" id="NP_456878.1">
    <property type="nucleotide sequence ID" value="NC_003198.1"/>
</dbReference>
<dbReference type="RefSeq" id="WP_000106616.1">
    <property type="nucleotide sequence ID" value="NZ_WSUR01000029.1"/>
</dbReference>
<dbReference type="STRING" id="220341.gene:17586465"/>
<dbReference type="KEGG" id="stt:t0528"/>
<dbReference type="KEGG" id="sty:STY2566"/>
<dbReference type="PATRIC" id="fig|220341.7.peg.2597"/>
<dbReference type="eggNOG" id="COG3092">
    <property type="taxonomic scope" value="Bacteria"/>
</dbReference>
<dbReference type="HOGENOM" id="CLU_128746_0_0_6"/>
<dbReference type="OMA" id="IMPPVAV"/>
<dbReference type="OrthoDB" id="7066670at2"/>
<dbReference type="Proteomes" id="UP000000541">
    <property type="component" value="Chromosome"/>
</dbReference>
<dbReference type="Proteomes" id="UP000002670">
    <property type="component" value="Chromosome"/>
</dbReference>
<dbReference type="GO" id="GO:0005886">
    <property type="term" value="C:plasma membrane"/>
    <property type="evidence" value="ECO:0007669"/>
    <property type="project" value="UniProtKB-SubCell"/>
</dbReference>
<dbReference type="HAMAP" id="MF_01101">
    <property type="entry name" value="UPF0208"/>
    <property type="match status" value="1"/>
</dbReference>
<dbReference type="InterPro" id="IPR007334">
    <property type="entry name" value="UPF0208"/>
</dbReference>
<dbReference type="NCBIfam" id="NF002493">
    <property type="entry name" value="PRK01816.1"/>
    <property type="match status" value="1"/>
</dbReference>
<dbReference type="Pfam" id="PF04217">
    <property type="entry name" value="DUF412"/>
    <property type="match status" value="1"/>
</dbReference>
<name>YFBV_SALTI</name>
<keyword id="KW-0997">Cell inner membrane</keyword>
<keyword id="KW-1003">Cell membrane</keyword>
<keyword id="KW-0472">Membrane</keyword>
<keyword id="KW-0812">Transmembrane</keyword>
<keyword id="KW-1133">Transmembrane helix</keyword>
<sequence>MSTPDNRSVNFFSLFRRGQHYAKTWPMEKRLAPVFVENRVIRMTRYAIRFMPPVAVFTLCWQIALGGQLGPAVATALFALSLPMQGLWWLGKRSLTPLPPSILNWFYEVRGKLQEAGQALAPVEGKPDYQALADTLKRAFKQLDKTFLDDL</sequence>
<organism>
    <name type="scientific">Salmonella typhi</name>
    <dbReference type="NCBI Taxonomy" id="90370"/>
    <lineage>
        <taxon>Bacteria</taxon>
        <taxon>Pseudomonadati</taxon>
        <taxon>Pseudomonadota</taxon>
        <taxon>Gammaproteobacteria</taxon>
        <taxon>Enterobacterales</taxon>
        <taxon>Enterobacteriaceae</taxon>
        <taxon>Salmonella</taxon>
    </lineage>
</organism>
<proteinExistence type="inferred from homology"/>
<comment type="subcellular location">
    <subcellularLocation>
        <location evidence="1">Cell inner membrane</location>
        <topology evidence="1">Multi-pass membrane protein</topology>
    </subcellularLocation>
</comment>
<comment type="similarity">
    <text evidence="3">Belongs to the UPF0208 family.</text>
</comment>
<feature type="chain" id="PRO_0000080820" description="UPF0208 membrane protein YfbV">
    <location>
        <begin position="1"/>
        <end position="151"/>
    </location>
</feature>
<feature type="topological domain" description="Cytoplasmic" evidence="2">
    <location>
        <begin position="1"/>
        <end position="45"/>
    </location>
</feature>
<feature type="transmembrane region" description="Helical" evidence="2">
    <location>
        <begin position="46"/>
        <end position="65"/>
    </location>
</feature>
<feature type="topological domain" description="Periplasmic" evidence="2">
    <location>
        <begin position="66"/>
        <end position="68"/>
    </location>
</feature>
<feature type="transmembrane region" description="Helical" evidence="2">
    <location>
        <begin position="69"/>
        <end position="91"/>
    </location>
</feature>
<feature type="topological domain" description="Cytoplasmic" evidence="2">
    <location>
        <begin position="92"/>
        <end position="151"/>
    </location>
</feature>